<comment type="function">
    <text evidence="1">Fluoride-specific ion channel. Important for reducing fluoride concentration in the cell, thus reducing its toxicity.</text>
</comment>
<comment type="catalytic activity">
    <reaction evidence="1">
        <text>fluoride(in) = fluoride(out)</text>
        <dbReference type="Rhea" id="RHEA:76159"/>
        <dbReference type="ChEBI" id="CHEBI:17051"/>
    </reaction>
    <physiologicalReaction direction="left-to-right" evidence="1">
        <dbReference type="Rhea" id="RHEA:76160"/>
    </physiologicalReaction>
</comment>
<comment type="activity regulation">
    <text evidence="1">Na(+) is not transported, but it plays an essential structural role and its presence is essential for fluoride channel function.</text>
</comment>
<comment type="subcellular location">
    <subcellularLocation>
        <location evidence="1">Cell membrane</location>
        <topology evidence="1">Multi-pass membrane protein</topology>
    </subcellularLocation>
</comment>
<comment type="similarity">
    <text evidence="1">Belongs to the fluoride channel Fluc/FEX (TC 1.A.43) family.</text>
</comment>
<comment type="sequence caution" evidence="2">
    <conflict type="erroneous initiation">
        <sequence resource="EMBL-CDS" id="AAZ57063"/>
    </conflict>
</comment>
<dbReference type="EMBL" id="CP000088">
    <property type="protein sequence ID" value="AAZ57063.1"/>
    <property type="status" value="ALT_INIT"/>
    <property type="molecule type" value="Genomic_DNA"/>
</dbReference>
<dbReference type="RefSeq" id="WP_016189423.1">
    <property type="nucleotide sequence ID" value="NC_007333.1"/>
</dbReference>
<dbReference type="SMR" id="Q47KF9"/>
<dbReference type="STRING" id="269800.Tfu_3030"/>
<dbReference type="KEGG" id="tfu:Tfu_3030"/>
<dbReference type="eggNOG" id="COG0239">
    <property type="taxonomic scope" value="Bacteria"/>
</dbReference>
<dbReference type="HOGENOM" id="CLU_114342_1_0_11"/>
<dbReference type="OrthoDB" id="4408652at2"/>
<dbReference type="GO" id="GO:0005886">
    <property type="term" value="C:plasma membrane"/>
    <property type="evidence" value="ECO:0007669"/>
    <property type="project" value="UniProtKB-SubCell"/>
</dbReference>
<dbReference type="GO" id="GO:0062054">
    <property type="term" value="F:fluoride channel activity"/>
    <property type="evidence" value="ECO:0007669"/>
    <property type="project" value="UniProtKB-UniRule"/>
</dbReference>
<dbReference type="GO" id="GO:0046872">
    <property type="term" value="F:metal ion binding"/>
    <property type="evidence" value="ECO:0007669"/>
    <property type="project" value="UniProtKB-KW"/>
</dbReference>
<dbReference type="GO" id="GO:0140114">
    <property type="term" value="P:cellular detoxification of fluoride"/>
    <property type="evidence" value="ECO:0007669"/>
    <property type="project" value="UniProtKB-UniRule"/>
</dbReference>
<dbReference type="HAMAP" id="MF_00454">
    <property type="entry name" value="FluC"/>
    <property type="match status" value="1"/>
</dbReference>
<dbReference type="InterPro" id="IPR003691">
    <property type="entry name" value="FluC"/>
</dbReference>
<dbReference type="PANTHER" id="PTHR28259">
    <property type="entry name" value="FLUORIDE EXPORT PROTEIN 1-RELATED"/>
    <property type="match status" value="1"/>
</dbReference>
<dbReference type="PANTHER" id="PTHR28259:SF1">
    <property type="entry name" value="FLUORIDE EXPORT PROTEIN 1-RELATED"/>
    <property type="match status" value="1"/>
</dbReference>
<dbReference type="Pfam" id="PF02537">
    <property type="entry name" value="CRCB"/>
    <property type="match status" value="1"/>
</dbReference>
<keyword id="KW-1003">Cell membrane</keyword>
<keyword id="KW-0407">Ion channel</keyword>
<keyword id="KW-0406">Ion transport</keyword>
<keyword id="KW-0472">Membrane</keyword>
<keyword id="KW-0479">Metal-binding</keyword>
<keyword id="KW-0915">Sodium</keyword>
<keyword id="KW-0812">Transmembrane</keyword>
<keyword id="KW-1133">Transmembrane helix</keyword>
<keyword id="KW-0813">Transport</keyword>
<accession>Q47KF9</accession>
<reference key="1">
    <citation type="journal article" date="2007" name="J. Bacteriol.">
        <title>Genome sequence and analysis of the soil cellulolytic actinomycete Thermobifida fusca YX.</title>
        <authorList>
            <person name="Lykidis A."/>
            <person name="Mavromatis K."/>
            <person name="Ivanova N."/>
            <person name="Anderson I."/>
            <person name="Land M."/>
            <person name="DiBartolo G."/>
            <person name="Martinez M."/>
            <person name="Lapidus A."/>
            <person name="Lucas S."/>
            <person name="Copeland A."/>
            <person name="Richardson P."/>
            <person name="Wilson D.B."/>
            <person name="Kyrpides N."/>
        </authorList>
    </citation>
    <scope>NUCLEOTIDE SEQUENCE [LARGE SCALE GENOMIC DNA]</scope>
    <source>
        <strain>YX</strain>
    </source>
</reference>
<protein>
    <recommendedName>
        <fullName evidence="1">Fluoride-specific ion channel FluC 2</fullName>
    </recommendedName>
</protein>
<name>FLUC2_THEFY</name>
<proteinExistence type="inferred from homology"/>
<feature type="chain" id="PRO_0000252956" description="Fluoride-specific ion channel FluC 2">
    <location>
        <begin position="1"/>
        <end position="135"/>
    </location>
</feature>
<feature type="transmembrane region" description="Helical" evidence="1">
    <location>
        <begin position="5"/>
        <end position="25"/>
    </location>
</feature>
<feature type="transmembrane region" description="Helical" evidence="1">
    <location>
        <begin position="36"/>
        <end position="56"/>
    </location>
</feature>
<feature type="transmembrane region" description="Helical" evidence="1">
    <location>
        <begin position="68"/>
        <end position="88"/>
    </location>
</feature>
<feature type="transmembrane region" description="Helical" evidence="1">
    <location>
        <begin position="100"/>
        <end position="120"/>
    </location>
</feature>
<feature type="binding site" evidence="1">
    <location>
        <position position="76"/>
    </location>
    <ligand>
        <name>Na(+)</name>
        <dbReference type="ChEBI" id="CHEBI:29101"/>
        <note>structural</note>
    </ligand>
</feature>
<feature type="binding site" evidence="1">
    <location>
        <position position="79"/>
    </location>
    <ligand>
        <name>Na(+)</name>
        <dbReference type="ChEBI" id="CHEBI:29101"/>
        <note>structural</note>
    </ligand>
</feature>
<evidence type="ECO:0000255" key="1">
    <source>
        <dbReference type="HAMAP-Rule" id="MF_00454"/>
    </source>
</evidence>
<evidence type="ECO:0000305" key="2"/>
<sequence length="135" mass="13441">MSWPVLAAVAAGGALGALARAGLLAATPQHPATADWGTVLVNVLGCALIGVLMETLTRRPNPHPLLRPFLGVGVLGGFTTFSAAITDATDAFAAHQPGEALLAIAANLIGALLAVSAAAGATATLLDRAAQRKKT</sequence>
<gene>
    <name evidence="1" type="primary">fluC2</name>
    <name evidence="1" type="synonym">crcB2</name>
    <name type="ordered locus">Tfu_3030</name>
</gene>
<organism>
    <name type="scientific">Thermobifida fusca (strain YX)</name>
    <dbReference type="NCBI Taxonomy" id="269800"/>
    <lineage>
        <taxon>Bacteria</taxon>
        <taxon>Bacillati</taxon>
        <taxon>Actinomycetota</taxon>
        <taxon>Actinomycetes</taxon>
        <taxon>Streptosporangiales</taxon>
        <taxon>Nocardiopsidaceae</taxon>
        <taxon>Thermobifida</taxon>
    </lineage>
</organism>